<keyword id="KW-0877">Alternative promoter usage</keyword>
<keyword id="KW-0025">Alternative splicing</keyword>
<keyword id="KW-0037">Angiogenesis</keyword>
<keyword id="KW-0130">Cell adhesion</keyword>
<keyword id="KW-0472">Membrane</keyword>
<keyword id="KW-1185">Reference proteome</keyword>
<keyword id="KW-0732">Signal</keyword>
<keyword id="KW-0812">Transmembrane</keyword>
<keyword id="KW-1133">Transmembrane helix</keyword>
<accession>D0PRN4</accession>
<accession>D0PRN5</accession>
<sequence length="668" mass="72893">MHLRTNPSICPGRRPAWTLWMCSLFWGCIVSSVWSSSNVASSASSSSSVSQAQYEHHFHGSKHHSVPISIYRSPVSLRGGHAGATYIFGKSGGLILYTWPANDRPSTRTDRLAVGFSTTVKDGILVRIDSAPGLGDFLQLHIEQGKIGVVFNIGTVDISIKEESTPVNDGKYHVVRFTRNGGNATLQVDSWPVNEHYPTGNTDSERFQMVKQKIPFKYNRPVEEWLQEKGRQLTIFNTQAQIAIGGKDRGRLFQGQLSGLYYNGLKVLNMAAENNPNIKINGSVRLVGEVPSILGTTPTTSVPPEMSTTVMETTTTMATTTTRKNRSPPSIQTTDDIVSSAECSSDDEDFIDCEPSTGKSGGELVIPLLVEDPLDIPPIATRAPFITLPPTFRPLLTIIETTKDSLSMTSEAGLPCLSDQGSDGCDDDGLVISGYGSGETFDSNLPPTDDEDFYTTFSLVTDKSLSTSIFEGGYKAHAPKWESKDFRPNKVSETGRTTTTSLSPELIRSTASSSTGMVPKLPAGKMNNRELKPQPDIVLLPLPTAYELDSTKLKSPLITSPMFRNVPTANPTEPGIRRVPGASEVVRESSSTTGMVVGIVAAAALCILILLYAMYKYRNRDEGSYQVDETRNYISNSAQSNGTLMKEKQQSSKSGHKKQKNKDKEYYV</sequence>
<evidence type="ECO:0000250" key="1"/>
<evidence type="ECO:0000255" key="2"/>
<evidence type="ECO:0000255" key="3">
    <source>
        <dbReference type="PROSITE-ProRule" id="PRU00122"/>
    </source>
</evidence>
<evidence type="ECO:0000256" key="4">
    <source>
        <dbReference type="SAM" id="MobiDB-lite"/>
    </source>
</evidence>
<evidence type="ECO:0000269" key="5">
    <source>
    </source>
</evidence>
<evidence type="ECO:0000303" key="6">
    <source>
    </source>
</evidence>
<evidence type="ECO:0000305" key="7"/>
<comment type="function">
    <text evidence="1 5">Neuronal cell surface protein that may be involved in cell recognition and cell adhesion (By similarity). Plays a role in angiogenesis.</text>
</comment>
<comment type="subcellular location">
    <subcellularLocation>
        <location evidence="7">Membrane</location>
        <topology evidence="7">Single-pass type I membrane protein</topology>
    </subcellularLocation>
</comment>
<comment type="alternative products">
    <event type="alternative promoter"/>
    <event type="alternative splicing"/>
    <isoform>
        <id>D0PRN4-1</id>
        <name>1b</name>
        <sequence type="displayed"/>
    </isoform>
    <isoform>
        <id>D0PRN4-2</id>
        <name>2b</name>
        <sequence type="described" ref="VSP_041705"/>
    </isoform>
    <isoform>
        <id>D0PRN3-1</id>
        <name>1a</name>
        <sequence type="external"/>
    </isoform>
    <text>A number of isoforms, alpha-type and beta-type are produced by alternative promoter usage. Beta-type isoforms differ from alpha-type isoforms in their N-terminus.</text>
</comment>
<comment type="tissue specificity">
    <text evidence="5">Brain and arteries (at protein level).</text>
</comment>
<comment type="PTM">
    <text evidence="1">Processed by alpha-secretase leading to the formation of an extracellular soluble protein as well as a C-terminal membrane-embedded fragment (CTF). Proteolysis of these CTFs by gamma-secretase releases intracellular domains (ICDs) and extracellular peptides (By similarity).</text>
</comment>
<comment type="miscellaneous">
    <molecule>Isoform 1b</molecule>
    <text>Produced by alternative promoter usage.</text>
</comment>
<comment type="miscellaneous">
    <molecule>Isoform 2b</molecule>
    <text evidence="7">Produced by alternative splicing of isoform 1b.</text>
</comment>
<comment type="similarity">
    <text evidence="7">Belongs to the neurexin family.</text>
</comment>
<dbReference type="EMBL" id="EU702429">
    <property type="protein sequence ID" value="ACF35430.1"/>
    <property type="molecule type" value="mRNA"/>
</dbReference>
<dbReference type="EMBL" id="EU702430">
    <property type="protein sequence ID" value="ACF35431.1"/>
    <property type="molecule type" value="mRNA"/>
</dbReference>
<dbReference type="RefSeq" id="NP_001258853.1">
    <molecule id="D0PRN4-1"/>
    <property type="nucleotide sequence ID" value="NM_001271924.2"/>
</dbReference>
<dbReference type="RefSeq" id="NP_001258854.1">
    <molecule id="D0PRN4-2"/>
    <property type="nucleotide sequence ID" value="NM_001271925.2"/>
</dbReference>
<dbReference type="SMR" id="D0PRN4"/>
<dbReference type="FunCoup" id="D0PRN4">
    <property type="interactions" value="64"/>
</dbReference>
<dbReference type="PaxDb" id="9031-ENSGALP00000017108"/>
<dbReference type="GeneID" id="423385"/>
<dbReference type="CTD" id="9369"/>
<dbReference type="VEuPathDB" id="HostDB:geneid_423385"/>
<dbReference type="eggNOG" id="KOG3514">
    <property type="taxonomic scope" value="Eukaryota"/>
</dbReference>
<dbReference type="InParanoid" id="D0PRN4"/>
<dbReference type="OrthoDB" id="6275838at2759"/>
<dbReference type="PhylomeDB" id="D0PRN4"/>
<dbReference type="Proteomes" id="UP000000539">
    <property type="component" value="Chromosome 5"/>
</dbReference>
<dbReference type="Bgee" id="ENSGALG00000027255">
    <property type="expression patterns" value="Expressed in cerebellum and 3 other cell types or tissues"/>
</dbReference>
<dbReference type="GO" id="GO:0016020">
    <property type="term" value="C:membrane"/>
    <property type="evidence" value="ECO:0007669"/>
    <property type="project" value="UniProtKB-SubCell"/>
</dbReference>
<dbReference type="GO" id="GO:0001525">
    <property type="term" value="P:angiogenesis"/>
    <property type="evidence" value="ECO:0000314"/>
    <property type="project" value="UniProtKB"/>
</dbReference>
<dbReference type="GO" id="GO:0007155">
    <property type="term" value="P:cell adhesion"/>
    <property type="evidence" value="ECO:0007669"/>
    <property type="project" value="UniProtKB-KW"/>
</dbReference>
<dbReference type="CDD" id="cd00110">
    <property type="entry name" value="LamG"/>
    <property type="match status" value="1"/>
</dbReference>
<dbReference type="FunFam" id="2.60.120.200:FF:000003">
    <property type="entry name" value="neurexin-1 isoform X1"/>
    <property type="match status" value="1"/>
</dbReference>
<dbReference type="Gene3D" id="2.60.120.200">
    <property type="match status" value="1"/>
</dbReference>
<dbReference type="InterPro" id="IPR013320">
    <property type="entry name" value="ConA-like_dom_sf"/>
</dbReference>
<dbReference type="InterPro" id="IPR001791">
    <property type="entry name" value="Laminin_G"/>
</dbReference>
<dbReference type="InterPro" id="IPR003585">
    <property type="entry name" value="Neurexin-like"/>
</dbReference>
<dbReference type="InterPro" id="IPR050372">
    <property type="entry name" value="Neurexin-related_CASP"/>
</dbReference>
<dbReference type="PANTHER" id="PTHR15036:SF57">
    <property type="entry name" value="NEUREXIN-3"/>
    <property type="match status" value="1"/>
</dbReference>
<dbReference type="PANTHER" id="PTHR15036">
    <property type="entry name" value="PIKACHURIN-LIKE PROTEIN"/>
    <property type="match status" value="1"/>
</dbReference>
<dbReference type="Pfam" id="PF02210">
    <property type="entry name" value="Laminin_G_2"/>
    <property type="match status" value="1"/>
</dbReference>
<dbReference type="SMART" id="SM00294">
    <property type="entry name" value="4.1m"/>
    <property type="match status" value="1"/>
</dbReference>
<dbReference type="SMART" id="SM00282">
    <property type="entry name" value="LamG"/>
    <property type="match status" value="1"/>
</dbReference>
<dbReference type="SUPFAM" id="SSF49899">
    <property type="entry name" value="Concanavalin A-like lectins/glucanases"/>
    <property type="match status" value="1"/>
</dbReference>
<dbReference type="PROSITE" id="PS50025">
    <property type="entry name" value="LAM_G_DOMAIN"/>
    <property type="match status" value="1"/>
</dbReference>
<proteinExistence type="evidence at protein level"/>
<feature type="signal peptide" evidence="2">
    <location>
        <begin position="1"/>
        <end position="35"/>
    </location>
</feature>
<feature type="chain" id="PRO_0000412546" description="Neurexin-3-beta">
    <location>
        <begin position="36"/>
        <end position="668"/>
    </location>
</feature>
<feature type="chain" id="PRO_0000412547" description="Neurexin-3-beta, soluble form" evidence="1">
    <location>
        <begin position="36"/>
        <end position="578"/>
    </location>
</feature>
<feature type="chain" id="PRO_0000412548" description="Neurexin-3-beta, C-terminal fragment" evidence="1">
    <location>
        <begin position="579"/>
        <end position="668"/>
    </location>
</feature>
<feature type="topological domain" description="Extracellular" evidence="2">
    <location>
        <begin position="36"/>
        <end position="593"/>
    </location>
</feature>
<feature type="transmembrane region" description="Helical" evidence="2">
    <location>
        <begin position="594"/>
        <end position="614"/>
    </location>
</feature>
<feature type="topological domain" description="Cytoplasmic" evidence="2">
    <location>
        <begin position="615"/>
        <end position="668"/>
    </location>
</feature>
<feature type="domain" description="Laminin G-like" evidence="3">
    <location>
        <begin position="84"/>
        <end position="284"/>
    </location>
</feature>
<feature type="region of interest" description="Disordered" evidence="4">
    <location>
        <begin position="510"/>
        <end position="529"/>
    </location>
</feature>
<feature type="region of interest" description="Disordered" evidence="4">
    <location>
        <begin position="636"/>
        <end position="668"/>
    </location>
</feature>
<feature type="splice variant" id="VSP_041705" description="In isoform 2b." evidence="6">
    <location>
        <begin position="358"/>
        <end position="360"/>
    </location>
</feature>
<organism>
    <name type="scientific">Gallus gallus</name>
    <name type="common">Chicken</name>
    <dbReference type="NCBI Taxonomy" id="9031"/>
    <lineage>
        <taxon>Eukaryota</taxon>
        <taxon>Metazoa</taxon>
        <taxon>Chordata</taxon>
        <taxon>Craniata</taxon>
        <taxon>Vertebrata</taxon>
        <taxon>Euteleostomi</taxon>
        <taxon>Archelosauria</taxon>
        <taxon>Archosauria</taxon>
        <taxon>Dinosauria</taxon>
        <taxon>Saurischia</taxon>
        <taxon>Theropoda</taxon>
        <taxon>Coelurosauria</taxon>
        <taxon>Aves</taxon>
        <taxon>Neognathae</taxon>
        <taxon>Galloanserae</taxon>
        <taxon>Galliformes</taxon>
        <taxon>Phasianidae</taxon>
        <taxon>Phasianinae</taxon>
        <taxon>Gallus</taxon>
    </lineage>
</organism>
<gene>
    <name type="primary">NRXN3</name>
</gene>
<protein>
    <recommendedName>
        <fullName>Neurexin-3-beta</fullName>
    </recommendedName>
    <alternativeName>
        <fullName>Neurexin III-beta</fullName>
    </alternativeName>
    <component>
        <recommendedName>
            <fullName>Neurexin-3-beta, soluble form</fullName>
        </recommendedName>
    </component>
    <component>
        <recommendedName>
            <fullName>Neurexin-3-beta, C-terminal fragment</fullName>
            <shortName>NRXN3-CTF</shortName>
        </recommendedName>
    </component>
</protein>
<name>NRX3B_CHICK</name>
<reference key="1">
    <citation type="journal article" date="2009" name="Proc. Natl. Acad. Sci. U.S.A.">
        <title>The synaptic proteins neurexins and neuroligins are widely expressed in the vascular system and contribute to its functions.</title>
        <authorList>
            <person name="Bottos A."/>
            <person name="Destro E."/>
            <person name="Rissone A."/>
            <person name="Graziano S."/>
            <person name="Cordara G."/>
            <person name="Assenzio B."/>
            <person name="Cera M.R."/>
            <person name="Mascia L."/>
            <person name="Bussolino F."/>
            <person name="Arese M."/>
        </authorList>
    </citation>
    <scope>NUCLEOTIDE SEQUENCE [MRNA] (ISOFORMS 1B AND 2B)</scope>
    <scope>FUNCTION</scope>
    <scope>TISSUE SPECIFICITY</scope>
</reference>